<gene>
    <name evidence="1" type="primary">rplA</name>
    <name type="ordered locus">Ccel_0309</name>
</gene>
<name>RL1_RUMCH</name>
<dbReference type="EMBL" id="CP001348">
    <property type="protein sequence ID" value="ACL74696.1"/>
    <property type="molecule type" value="Genomic_DNA"/>
</dbReference>
<dbReference type="RefSeq" id="WP_012634761.1">
    <property type="nucleotide sequence ID" value="NC_011898.1"/>
</dbReference>
<dbReference type="SMR" id="B8I5M9"/>
<dbReference type="STRING" id="394503.Ccel_0309"/>
<dbReference type="KEGG" id="cce:Ccel_0309"/>
<dbReference type="eggNOG" id="COG0081">
    <property type="taxonomic scope" value="Bacteria"/>
</dbReference>
<dbReference type="HOGENOM" id="CLU_062853_0_0_9"/>
<dbReference type="OrthoDB" id="9803740at2"/>
<dbReference type="Proteomes" id="UP000001349">
    <property type="component" value="Chromosome"/>
</dbReference>
<dbReference type="GO" id="GO:0015934">
    <property type="term" value="C:large ribosomal subunit"/>
    <property type="evidence" value="ECO:0007669"/>
    <property type="project" value="InterPro"/>
</dbReference>
<dbReference type="GO" id="GO:0019843">
    <property type="term" value="F:rRNA binding"/>
    <property type="evidence" value="ECO:0007669"/>
    <property type="project" value="UniProtKB-UniRule"/>
</dbReference>
<dbReference type="GO" id="GO:0003735">
    <property type="term" value="F:structural constituent of ribosome"/>
    <property type="evidence" value="ECO:0007669"/>
    <property type="project" value="InterPro"/>
</dbReference>
<dbReference type="GO" id="GO:0000049">
    <property type="term" value="F:tRNA binding"/>
    <property type="evidence" value="ECO:0007669"/>
    <property type="project" value="UniProtKB-KW"/>
</dbReference>
<dbReference type="GO" id="GO:0006417">
    <property type="term" value="P:regulation of translation"/>
    <property type="evidence" value="ECO:0007669"/>
    <property type="project" value="UniProtKB-KW"/>
</dbReference>
<dbReference type="GO" id="GO:0006412">
    <property type="term" value="P:translation"/>
    <property type="evidence" value="ECO:0007669"/>
    <property type="project" value="UniProtKB-UniRule"/>
</dbReference>
<dbReference type="CDD" id="cd00403">
    <property type="entry name" value="Ribosomal_L1"/>
    <property type="match status" value="1"/>
</dbReference>
<dbReference type="FunFam" id="3.40.50.790:FF:000001">
    <property type="entry name" value="50S ribosomal protein L1"/>
    <property type="match status" value="1"/>
</dbReference>
<dbReference type="Gene3D" id="3.30.190.20">
    <property type="match status" value="1"/>
</dbReference>
<dbReference type="Gene3D" id="3.40.50.790">
    <property type="match status" value="1"/>
</dbReference>
<dbReference type="HAMAP" id="MF_01318_B">
    <property type="entry name" value="Ribosomal_uL1_B"/>
    <property type="match status" value="1"/>
</dbReference>
<dbReference type="InterPro" id="IPR005878">
    <property type="entry name" value="Ribosom_uL1_bac-type"/>
</dbReference>
<dbReference type="InterPro" id="IPR002143">
    <property type="entry name" value="Ribosomal_uL1"/>
</dbReference>
<dbReference type="InterPro" id="IPR023674">
    <property type="entry name" value="Ribosomal_uL1-like"/>
</dbReference>
<dbReference type="InterPro" id="IPR028364">
    <property type="entry name" value="Ribosomal_uL1/biogenesis"/>
</dbReference>
<dbReference type="InterPro" id="IPR016095">
    <property type="entry name" value="Ribosomal_uL1_3-a/b-sand"/>
</dbReference>
<dbReference type="InterPro" id="IPR023673">
    <property type="entry name" value="Ribosomal_uL1_CS"/>
</dbReference>
<dbReference type="NCBIfam" id="TIGR01169">
    <property type="entry name" value="rplA_bact"/>
    <property type="match status" value="1"/>
</dbReference>
<dbReference type="PANTHER" id="PTHR36427">
    <property type="entry name" value="54S RIBOSOMAL PROTEIN L1, MITOCHONDRIAL"/>
    <property type="match status" value="1"/>
</dbReference>
<dbReference type="PANTHER" id="PTHR36427:SF3">
    <property type="entry name" value="LARGE RIBOSOMAL SUBUNIT PROTEIN UL1M"/>
    <property type="match status" value="1"/>
</dbReference>
<dbReference type="Pfam" id="PF00687">
    <property type="entry name" value="Ribosomal_L1"/>
    <property type="match status" value="1"/>
</dbReference>
<dbReference type="PIRSF" id="PIRSF002155">
    <property type="entry name" value="Ribosomal_L1"/>
    <property type="match status" value="1"/>
</dbReference>
<dbReference type="SUPFAM" id="SSF56808">
    <property type="entry name" value="Ribosomal protein L1"/>
    <property type="match status" value="1"/>
</dbReference>
<dbReference type="PROSITE" id="PS01199">
    <property type="entry name" value="RIBOSOMAL_L1"/>
    <property type="match status" value="1"/>
</dbReference>
<comment type="function">
    <text evidence="1">Binds directly to 23S rRNA. The L1 stalk is quite mobile in the ribosome, and is involved in E site tRNA release.</text>
</comment>
<comment type="function">
    <text evidence="1">Protein L1 is also a translational repressor protein, it controls the translation of the L11 operon by binding to its mRNA.</text>
</comment>
<comment type="subunit">
    <text evidence="1">Part of the 50S ribosomal subunit.</text>
</comment>
<comment type="similarity">
    <text evidence="1">Belongs to the universal ribosomal protein uL1 family.</text>
</comment>
<accession>B8I5M9</accession>
<feature type="chain" id="PRO_1000165672" description="Large ribosomal subunit protein uL1">
    <location>
        <begin position="1"/>
        <end position="230"/>
    </location>
</feature>
<reference key="1">
    <citation type="submission" date="2009-01" db="EMBL/GenBank/DDBJ databases">
        <title>Complete sequence of Clostridium cellulolyticum H10.</title>
        <authorList>
            <consortium name="US DOE Joint Genome Institute"/>
            <person name="Lucas S."/>
            <person name="Copeland A."/>
            <person name="Lapidus A."/>
            <person name="Glavina del Rio T."/>
            <person name="Dalin E."/>
            <person name="Tice H."/>
            <person name="Bruce D."/>
            <person name="Goodwin L."/>
            <person name="Pitluck S."/>
            <person name="Chertkov O."/>
            <person name="Saunders E."/>
            <person name="Brettin T."/>
            <person name="Detter J.C."/>
            <person name="Han C."/>
            <person name="Larimer F."/>
            <person name="Land M."/>
            <person name="Hauser L."/>
            <person name="Kyrpides N."/>
            <person name="Ivanova N."/>
            <person name="Zhou J."/>
            <person name="Richardson P."/>
        </authorList>
    </citation>
    <scope>NUCLEOTIDE SEQUENCE [LARGE SCALE GENOMIC DNA]</scope>
    <source>
        <strain>ATCC 35319 / DSM 5812 / JCM 6584 / H10</strain>
    </source>
</reference>
<organism>
    <name type="scientific">Ruminiclostridium cellulolyticum (strain ATCC 35319 / DSM 5812 / JCM 6584 / H10)</name>
    <name type="common">Clostridium cellulolyticum</name>
    <dbReference type="NCBI Taxonomy" id="394503"/>
    <lineage>
        <taxon>Bacteria</taxon>
        <taxon>Bacillati</taxon>
        <taxon>Bacillota</taxon>
        <taxon>Clostridia</taxon>
        <taxon>Eubacteriales</taxon>
        <taxon>Oscillospiraceae</taxon>
        <taxon>Ruminiclostridium</taxon>
    </lineage>
</organism>
<evidence type="ECO:0000255" key="1">
    <source>
        <dbReference type="HAMAP-Rule" id="MF_01318"/>
    </source>
</evidence>
<evidence type="ECO:0000305" key="2"/>
<proteinExistence type="inferred from homology"/>
<sequence>MFRGKKYQESSKLIDRLKLYEPSEALELAQKTAKAKFDETIEVHIKLGVDSRHADQQVRGAVVLPHGTGKKVRVLVFAKGDKAKEAEQAGADFVGGEELISKIQNENWFDYDVVVATPDMMGVVGRLGKVLGPKGLMPNPKAGTVSMDVAKAIADIKAGKIEYRLDKTNIIHCPIGKASFGNEKLMDNFRTLLGAIIKAKPAAAKGQYLKSVVVTSTMGPGIKINPLRVE</sequence>
<protein>
    <recommendedName>
        <fullName evidence="1">Large ribosomal subunit protein uL1</fullName>
    </recommendedName>
    <alternativeName>
        <fullName evidence="2">50S ribosomal protein L1</fullName>
    </alternativeName>
</protein>
<keyword id="KW-1185">Reference proteome</keyword>
<keyword id="KW-0678">Repressor</keyword>
<keyword id="KW-0687">Ribonucleoprotein</keyword>
<keyword id="KW-0689">Ribosomal protein</keyword>
<keyword id="KW-0694">RNA-binding</keyword>
<keyword id="KW-0699">rRNA-binding</keyword>
<keyword id="KW-0810">Translation regulation</keyword>
<keyword id="KW-0820">tRNA-binding</keyword>